<sequence length="168" mass="18969">MSRLVLLISLVIVVASAAAPQCEVCKKVLDDVMAKVPAGDKSKPDAIGKVIREHCETTRNKENKFCFYIGALPESATSIMNEVTKPLSWSMPTEKVCLEKLKGKDAQICELKYDKPLDWKTIDLKKMRVKELKNILGEWGEVCKGCTEKAELIKRIEELKPKYVKEEL</sequence>
<name>MANF_CAEEL</name>
<proteinExistence type="evidence at protein level"/>
<gene>
    <name evidence="5 8" type="primary">manf-1</name>
    <name evidence="8" type="ORF">Y54G2A.23</name>
</gene>
<comment type="function">
    <text evidence="1 3 4">Inhibits endoplasmic reticulum (ER) stress response (By similarity). Retained in the ER under normal conditions and is up-regulated and secreted by the ER in response to ER stress and hypoxia (By similarity). Following secretion by the ER, directly binds to 3-O-sulfogalactosylceramide, a lipid sulfatide in the outer cell membrane of target cells (PubMed:29497057). Sulfatide binding promotes its cellular uptake by endocytosis, and is required for its role in alleviating ER stress under ER stress conditions (By similarity). Has a neuroprotective role, ensuring survival of dopaminergic neurons during normal growth (PubMed:30147641).</text>
</comment>
<comment type="subcellular location">
    <subcellularLocation>
        <location evidence="1">Secreted</location>
    </subcellularLocation>
    <subcellularLocation>
        <location evidence="1">Endoplasmic reticulum lumen</location>
    </subcellularLocation>
    <text evidence="1">Retained in the endoplasmic reticulum (ER) under normal conditions. Up-regulated and secreted by the ER in response to ER stress.</text>
</comment>
<comment type="tissue specificity">
    <text evidence="3 4">Expressed in the intestine, spermatheca and nervous system (PubMed:29497057, PubMed:30147641). Expressed in the hypoderm (PubMed:29497057). Expressed in structures of the excretory system (PubMed:30147641). Not expressed in the male gonad (PubMed:30147641).</text>
</comment>
<comment type="developmental stage">
    <text evidence="4">Expressed throughout development, but expression declines with age (PubMed:30147641). Expressed in regions corresponding to intestinal cells and the body wall muscle quadrant in gastrulating embryos, and this continues throughout all larval stages and into adulthood in most tissues except gonadal cells (PubMed:30147641). In L4 stage larva, expressed in pharyngeal and vulval muscles (PubMed:30147641).</text>
</comment>
<comment type="induction">
    <text evidence="7">By endoplasmic reticulum stress.</text>
</comment>
<comment type="disruption phenotype">
    <text evidence="3 4">Animals are viable, and despite a delay in growth rate, appear healthy and have a normal lifespan (PubMed:30147641). No defects in the axon formation or guidance of dopaminergic, GABAergic or serotinergic neurons (PubMed:30147641). However, there is an age-dependent decline in the number of viable dopaminergic neurons under normal growth conditions (PubMed:30147641). Up-regulation of ER stress response protein hsp-4 in the intestine, hypodermis and spermatheca (PubMed:30147641). RNAi-mediated knockdown results in up-regulation of hsp-4 in the intestine and pharyngeal epithelium (PubMed:29497057).</text>
</comment>
<comment type="similarity">
    <text evidence="6">Belongs to the ARMET family.</text>
</comment>
<protein>
    <recommendedName>
        <fullName evidence="8">Mesencephalic astrocyte-derived neurotrophic factor homolog</fullName>
    </recommendedName>
    <alternativeName>
        <fullName>ARMET-like protein</fullName>
    </alternativeName>
    <alternativeName>
        <fullName>MANF/CDNF-like protein</fullName>
    </alternativeName>
</protein>
<organism>
    <name type="scientific">Caenorhabditis elegans</name>
    <dbReference type="NCBI Taxonomy" id="6239"/>
    <lineage>
        <taxon>Eukaryota</taxon>
        <taxon>Metazoa</taxon>
        <taxon>Ecdysozoa</taxon>
        <taxon>Nematoda</taxon>
        <taxon>Chromadorea</taxon>
        <taxon>Rhabditida</taxon>
        <taxon>Rhabditina</taxon>
        <taxon>Rhabditomorpha</taxon>
        <taxon>Rhabditoidea</taxon>
        <taxon>Rhabditidae</taxon>
        <taxon>Peloderinae</taxon>
        <taxon>Caenorhabditis</taxon>
    </lineage>
</organism>
<keyword id="KW-1015">Disulfide bond</keyword>
<keyword id="KW-0256">Endoplasmic reticulum</keyword>
<keyword id="KW-0446">Lipid-binding</keyword>
<keyword id="KW-1185">Reference proteome</keyword>
<keyword id="KW-0964">Secreted</keyword>
<keyword id="KW-0732">Signal</keyword>
<keyword id="KW-0346">Stress response</keyword>
<evidence type="ECO:0000250" key="1">
    <source>
        <dbReference type="UniProtKB" id="P55145"/>
    </source>
</evidence>
<evidence type="ECO:0000255" key="2"/>
<evidence type="ECO:0000269" key="3">
    <source>
    </source>
</evidence>
<evidence type="ECO:0000269" key="4">
    <source>
    </source>
</evidence>
<evidence type="ECO:0000303" key="5">
    <source>
    </source>
</evidence>
<evidence type="ECO:0000305" key="6"/>
<evidence type="ECO:0000305" key="7">
    <source>
    </source>
</evidence>
<evidence type="ECO:0000312" key="8">
    <source>
        <dbReference type="WormBase" id="Y54G2A.23"/>
    </source>
</evidence>
<reference key="1">
    <citation type="journal article" date="1998" name="Science">
        <title>Genome sequence of the nematode C. elegans: a platform for investigating biology.</title>
        <authorList>
            <consortium name="The C. elegans sequencing consortium"/>
        </authorList>
    </citation>
    <scope>NUCLEOTIDE SEQUENCE [LARGE SCALE GENOMIC DNA]</scope>
    <source>
        <strain>Bristol N2</strain>
    </source>
</reference>
<reference key="2">
    <citation type="journal article" date="2018" name="Front. Neurosci.">
        <title>C. elegans MANF Homolog Is Necessary for the Protection of Dopaminergic Neurons and ER Unfolded Protein Response.</title>
        <authorList>
            <person name="Richman C."/>
            <person name="Rashid S."/>
            <person name="Prashar S."/>
            <person name="Mishra R."/>
            <person name="Selvaganapathy P.R."/>
            <person name="Gupta B.P."/>
        </authorList>
    </citation>
    <scope>FUNCTION</scope>
    <scope>TISSUE SPECIFICITY</scope>
    <scope>DEVELOPMENTAL STAGE</scope>
    <scope>DISRUPTION PHENOTYPE</scope>
</reference>
<reference key="3">
    <citation type="journal article" date="2018" name="Nat. Commun.">
        <title>Conserved roles of C. elegans and human MANFs in sulfatide binding and cytoprotection.</title>
        <authorList>
            <person name="Bai M."/>
            <person name="Vozdek R."/>
            <person name="Hnizda A."/>
            <person name="Jiang C."/>
            <person name="Wang B."/>
            <person name="Kuchar L."/>
            <person name="Li T."/>
            <person name="Zhang Y."/>
            <person name="Wood C."/>
            <person name="Feng L."/>
            <person name="Dang Y."/>
            <person name="Ma D.K."/>
        </authorList>
    </citation>
    <scope>FUNCTION</scope>
    <scope>TISSUE SPECIFICITY</scope>
    <scope>INDUCTION</scope>
    <scope>DISRUPTION PHENOTYPE</scope>
    <scope>MUTAGENESIS OF SER-75 AND CYS-146</scope>
</reference>
<dbReference type="EMBL" id="BX284604">
    <property type="protein sequence ID" value="CCD83510.1"/>
    <property type="molecule type" value="Genomic_DNA"/>
</dbReference>
<dbReference type="RefSeq" id="NP_500273.2">
    <property type="nucleotide sequence ID" value="NM_067872.5"/>
</dbReference>
<dbReference type="SMR" id="Q9N3B0"/>
<dbReference type="BioGRID" id="42219">
    <property type="interactions" value="3"/>
</dbReference>
<dbReference type="FunCoup" id="Q9N3B0">
    <property type="interactions" value="1206"/>
</dbReference>
<dbReference type="STRING" id="6239.Y54G2A.23.1"/>
<dbReference type="PaxDb" id="6239-Y54G2A.23"/>
<dbReference type="PeptideAtlas" id="Q9N3B0"/>
<dbReference type="EnsemblMetazoa" id="Y54G2A.23.1">
    <property type="protein sequence ID" value="Y54G2A.23.1"/>
    <property type="gene ID" value="WBGene00021888"/>
</dbReference>
<dbReference type="GeneID" id="177074"/>
<dbReference type="KEGG" id="cel:CELE_Y54G2A.23"/>
<dbReference type="UCSC" id="Y54G2A.23.1">
    <property type="organism name" value="c. elegans"/>
</dbReference>
<dbReference type="AGR" id="WB:WBGene00021888"/>
<dbReference type="CTD" id="177074"/>
<dbReference type="WormBase" id="Y54G2A.23">
    <property type="protein sequence ID" value="CE30049"/>
    <property type="gene ID" value="WBGene00021888"/>
    <property type="gene designation" value="manf-1"/>
</dbReference>
<dbReference type="eggNOG" id="KOG4154">
    <property type="taxonomic scope" value="Eukaryota"/>
</dbReference>
<dbReference type="GeneTree" id="ENSGT00390000007160"/>
<dbReference type="HOGENOM" id="CLU_099080_1_0_1"/>
<dbReference type="InParanoid" id="Q9N3B0"/>
<dbReference type="OMA" id="WSMPADK"/>
<dbReference type="OrthoDB" id="5597848at2759"/>
<dbReference type="PhylomeDB" id="Q9N3B0"/>
<dbReference type="Reactome" id="R-CEL-114608">
    <property type="pathway name" value="Platelet degranulation"/>
</dbReference>
<dbReference type="PRO" id="PR:Q9N3B0"/>
<dbReference type="Proteomes" id="UP000001940">
    <property type="component" value="Chromosome IV"/>
</dbReference>
<dbReference type="Bgee" id="WBGene00021888">
    <property type="expression patterns" value="Expressed in pharyngeal muscle cell (C elegans) and 3 other cell types or tissues"/>
</dbReference>
<dbReference type="GO" id="GO:0005783">
    <property type="term" value="C:endoplasmic reticulum"/>
    <property type="evidence" value="ECO:0000318"/>
    <property type="project" value="GO_Central"/>
</dbReference>
<dbReference type="GO" id="GO:0005788">
    <property type="term" value="C:endoplasmic reticulum lumen"/>
    <property type="evidence" value="ECO:0007669"/>
    <property type="project" value="UniProtKB-SubCell"/>
</dbReference>
<dbReference type="GO" id="GO:0005615">
    <property type="term" value="C:extracellular space"/>
    <property type="evidence" value="ECO:0000318"/>
    <property type="project" value="GO_Central"/>
</dbReference>
<dbReference type="GO" id="GO:0120146">
    <property type="term" value="F:sulfatide binding"/>
    <property type="evidence" value="ECO:0000353"/>
    <property type="project" value="UniProtKB"/>
</dbReference>
<dbReference type="GO" id="GO:0036500">
    <property type="term" value="P:ATF6-mediated unfolded protein response"/>
    <property type="evidence" value="ECO:0000250"/>
    <property type="project" value="WormBase"/>
</dbReference>
<dbReference type="GO" id="GO:0048589">
    <property type="term" value="P:developmental growth"/>
    <property type="evidence" value="ECO:0000315"/>
    <property type="project" value="UniProtKB"/>
</dbReference>
<dbReference type="GO" id="GO:0071542">
    <property type="term" value="P:dopaminergic neuron differentiation"/>
    <property type="evidence" value="ECO:0000318"/>
    <property type="project" value="GO_Central"/>
</dbReference>
<dbReference type="GO" id="GO:0031175">
    <property type="term" value="P:neuron projection development"/>
    <property type="evidence" value="ECO:0000318"/>
    <property type="project" value="GO_Central"/>
</dbReference>
<dbReference type="GO" id="GO:1905897">
    <property type="term" value="P:regulation of response to endoplasmic reticulum stress"/>
    <property type="evidence" value="ECO:0000315"/>
    <property type="project" value="UniProtKB"/>
</dbReference>
<dbReference type="FunFam" id="1.10.225.10:FF:000003">
    <property type="entry name" value="Mesencephalic astrocyte-derived neurotrophic factor"/>
    <property type="match status" value="1"/>
</dbReference>
<dbReference type="Gene3D" id="1.10.720.30">
    <property type="entry name" value="SAP domain"/>
    <property type="match status" value="1"/>
</dbReference>
<dbReference type="Gene3D" id="1.10.225.10">
    <property type="entry name" value="Saposin-like"/>
    <property type="match status" value="1"/>
</dbReference>
<dbReference type="InterPro" id="IPR045333">
    <property type="entry name" value="ARMET-like"/>
</dbReference>
<dbReference type="InterPro" id="IPR019345">
    <property type="entry name" value="ARMET_C"/>
</dbReference>
<dbReference type="InterPro" id="IPR045332">
    <property type="entry name" value="ARMET_N"/>
</dbReference>
<dbReference type="InterPro" id="IPR036361">
    <property type="entry name" value="SAP_dom_sf"/>
</dbReference>
<dbReference type="PANTHER" id="PTHR12990">
    <property type="entry name" value="ARMET-LIKE PROTEIN"/>
    <property type="match status" value="1"/>
</dbReference>
<dbReference type="PANTHER" id="PTHR12990:SF5">
    <property type="entry name" value="MESENCEPHALIC ASTROCYTE-DERIVED NEUROTROPHIC FACTOR HOMOLOG"/>
    <property type="match status" value="1"/>
</dbReference>
<dbReference type="Pfam" id="PF10208">
    <property type="entry name" value="ARMET_C"/>
    <property type="match status" value="1"/>
</dbReference>
<dbReference type="Pfam" id="PF20145">
    <property type="entry name" value="ARMET_N"/>
    <property type="match status" value="1"/>
</dbReference>
<dbReference type="SUPFAM" id="SSF68906">
    <property type="entry name" value="SAP domain"/>
    <property type="match status" value="1"/>
</dbReference>
<feature type="signal peptide" evidence="2">
    <location>
        <begin position="1"/>
        <end position="17"/>
    </location>
</feature>
<feature type="chain" id="PRO_0000002307" description="Mesencephalic astrocyte-derived neurotrophic factor homolog">
    <location>
        <begin position="18"/>
        <end position="168"/>
    </location>
</feature>
<feature type="disulfide bond" evidence="1">
    <location>
        <begin position="22"/>
        <end position="109"/>
    </location>
</feature>
<feature type="disulfide bond" evidence="1">
    <location>
        <begin position="25"/>
        <end position="97"/>
    </location>
</feature>
<feature type="disulfide bond" evidence="1">
    <location>
        <begin position="55"/>
        <end position="66"/>
    </location>
</feature>
<feature type="disulfide bond" evidence="1">
    <location>
        <begin position="143"/>
        <end position="146"/>
    </location>
</feature>
<feature type="mutagenesis site" description="In dma1; results in up-regulation of ER stress response protein hsp-4 in the intestine and pharyngeal epithelium. Elevated expression of hsp-4 is suppressed in xbp-1 or ire-1 RNAi-mediated knockdown animals." evidence="3">
    <original>S</original>
    <variation>L</variation>
    <location>
        <position position="75"/>
    </location>
</feature>
<feature type="mutagenesis site" description="Does not rescue the elevated expression of the ER stress response protein hsp-4 in the dma1 mutant." evidence="3">
    <original>C</original>
    <variation>G</variation>
    <location>
        <position position="146"/>
    </location>
</feature>
<accession>Q9N3B0</accession>